<keyword id="KW-0068">Autocatalytic cleavage</keyword>
<keyword id="KW-0106">Calcium</keyword>
<keyword id="KW-1003">Cell membrane</keyword>
<keyword id="KW-0217">Developmental protein</keyword>
<keyword id="KW-0256">Endoplasmic reticulum</keyword>
<keyword id="KW-0333">Golgi apparatus</keyword>
<keyword id="KW-0378">Hydrolase</keyword>
<keyword id="KW-0449">Lipoprotein</keyword>
<keyword id="KW-0472">Membrane</keyword>
<keyword id="KW-0479">Metal-binding</keyword>
<keyword id="KW-0564">Palmitate</keyword>
<keyword id="KW-0645">Protease</keyword>
<keyword id="KW-1185">Reference proteome</keyword>
<keyword id="KW-0677">Repeat</keyword>
<keyword id="KW-0732">Signal</keyword>
<keyword id="KW-0808">Transferase</keyword>
<keyword id="KW-0862">Zinc</keyword>
<sequence length="444" mass="49453">MLVATQSLLLLSFICTLVTPPGLACGPGRGIGKRRHPKKLTPLAYKQFIPNVAEKTLGASGRYEGKITRNSDCFKELTPNYNPDIMFKDEESTGADRLMTQRCKDKLNALAISVMNQWPGVKLRVTEGWDEDGHHLEESLHYEGRAVDITTSDRDRSKYGMLGRLAVEAGFDWVYYESKAHIHCSVKAENSVAAKSGGCFPAGARVMVEFGGTKAVKDLRPGDRVLSSDPQGNLLYSDFLMFIDQERDVKKLFYVIETSQRKIRLTAAHLLFVAQTKVNGTRSFKSVFASNIQPGDLIYTADPKTMTLKAVKVEKVDLEEDTGAYAPLTAHGTVVIDQVLASCYAVIEEHTWAHLAFAPLRFGMSLSSYIYPRDSSPPSGLQPHHQVDLQSHHQVDLQSHHQVDLQSHHQLEGIHWYSQLLYQIGTWLLDSNSLHPLGMATKSS</sequence>
<accession>Q92000</accession>
<accession>Q91894</accession>
<feature type="signal peptide" evidence="3">
    <location>
        <begin position="1"/>
        <end position="24"/>
    </location>
</feature>
<feature type="chain" id="PRO_0000013220" description="Sonic hedgehog protein">
    <location>
        <begin position="25"/>
        <end position="444"/>
    </location>
</feature>
<feature type="chain" id="PRO_0000013221" description="Sonic hedgehog protein N-product">
    <location>
        <begin position="25"/>
        <end position="198"/>
    </location>
</feature>
<feature type="repeat" description="1">
    <location>
        <begin position="386"/>
        <end position="393"/>
    </location>
</feature>
<feature type="repeat" description="2">
    <location>
        <begin position="394"/>
        <end position="401"/>
    </location>
</feature>
<feature type="repeat" description="3">
    <location>
        <begin position="403"/>
        <end position="409"/>
    </location>
</feature>
<feature type="region of interest" description="3 X 8 AA tandem repeats of Q-V-D-L-Q-S-H-H">
    <location>
        <begin position="386"/>
        <end position="409"/>
    </location>
</feature>
<feature type="short sequence motif" description="Cardin-Weintraub" evidence="4">
    <location>
        <begin position="33"/>
        <end position="39"/>
    </location>
</feature>
<feature type="binding site" evidence="3">
    <location>
        <position position="90"/>
    </location>
    <ligand>
        <name>Ca(2+)</name>
        <dbReference type="ChEBI" id="CHEBI:29108"/>
        <label>1</label>
    </ligand>
</feature>
<feature type="binding site" evidence="3">
    <location>
        <position position="91"/>
    </location>
    <ligand>
        <name>Ca(2+)</name>
        <dbReference type="ChEBI" id="CHEBI:29108"/>
        <label>1</label>
    </ligand>
</feature>
<feature type="binding site" evidence="3">
    <location>
        <position position="91"/>
    </location>
    <ligand>
        <name>Ca(2+)</name>
        <dbReference type="ChEBI" id="CHEBI:29108"/>
        <label>2</label>
    </ligand>
</feature>
<feature type="binding site" evidence="3">
    <location>
        <position position="96"/>
    </location>
    <ligand>
        <name>Ca(2+)</name>
        <dbReference type="ChEBI" id="CHEBI:29108"/>
        <label>1</label>
    </ligand>
</feature>
<feature type="binding site" evidence="3">
    <location>
        <position position="126"/>
    </location>
    <ligand>
        <name>Ca(2+)</name>
        <dbReference type="ChEBI" id="CHEBI:29108"/>
        <label>1</label>
    </ligand>
</feature>
<feature type="binding site" evidence="3">
    <location>
        <position position="127"/>
    </location>
    <ligand>
        <name>Ca(2+)</name>
        <dbReference type="ChEBI" id="CHEBI:29108"/>
        <label>1</label>
    </ligand>
</feature>
<feature type="binding site" evidence="3">
    <location>
        <position position="127"/>
    </location>
    <ligand>
        <name>Ca(2+)</name>
        <dbReference type="ChEBI" id="CHEBI:29108"/>
        <label>2</label>
    </ligand>
</feature>
<feature type="binding site" evidence="3">
    <location>
        <position position="130"/>
    </location>
    <ligand>
        <name>Ca(2+)</name>
        <dbReference type="ChEBI" id="CHEBI:29108"/>
        <label>2</label>
    </ligand>
</feature>
<feature type="binding site" evidence="3">
    <location>
        <position position="132"/>
    </location>
    <ligand>
        <name>Ca(2+)</name>
        <dbReference type="ChEBI" id="CHEBI:29108"/>
        <label>2</label>
    </ligand>
</feature>
<feature type="binding site" evidence="3">
    <location>
        <position position="141"/>
    </location>
    <ligand>
        <name>Zn(2+)</name>
        <dbReference type="ChEBI" id="CHEBI:29105"/>
    </ligand>
</feature>
<feature type="binding site" evidence="3">
    <location>
        <position position="148"/>
    </location>
    <ligand>
        <name>Zn(2+)</name>
        <dbReference type="ChEBI" id="CHEBI:29105"/>
    </ligand>
</feature>
<feature type="binding site" evidence="3">
    <location>
        <position position="183"/>
    </location>
    <ligand>
        <name>Zn(2+)</name>
        <dbReference type="ChEBI" id="CHEBI:29105"/>
    </ligand>
</feature>
<feature type="site" description="Cleavage; by autolysis" evidence="2">
    <location>
        <begin position="198"/>
        <end position="199"/>
    </location>
</feature>
<feature type="site" description="Involved in cholesterol transfer" evidence="2">
    <location>
        <position position="244"/>
    </location>
</feature>
<feature type="site" description="Involved in auto-cleavage" evidence="2">
    <location>
        <position position="266"/>
    </location>
</feature>
<feature type="site" description="Essential for auto-cleavage" evidence="2">
    <location>
        <position position="269"/>
    </location>
</feature>
<feature type="lipid moiety-binding region" description="N-palmitoyl cysteine" evidence="1">
    <location>
        <position position="25"/>
    </location>
</feature>
<feature type="lipid moiety-binding region" description="Cholesterol glycine ester" evidence="4">
    <location>
        <position position="198"/>
    </location>
</feature>
<feature type="sequence conflict" description="In Ref. 3; AAA49981." evidence="8" ref="3">
    <original>TQSLL</original>
    <variation>NSNLCW</variation>
    <location>
        <begin position="5"/>
        <end position="9"/>
    </location>
</feature>
<feature type="sequence conflict" description="In Ref. 3; AAA49981." evidence="8" ref="3">
    <original>DPKTMTLKAVKVEKVDLE</original>
    <variation>ESQDHDLEGRGKWRRLILR</variation>
    <location>
        <begin position="302"/>
        <end position="319"/>
    </location>
</feature>
<feature type="sequence conflict" description="In Ref. 3; AAA49981." evidence="8" ref="3">
    <original>N</original>
    <variation>S</variation>
    <location>
        <position position="432"/>
    </location>
</feature>
<protein>
    <recommendedName>
        <fullName evidence="8">Sonic hedgehog protein</fullName>
        <shortName>SHH</shortName>
        <ecNumber evidence="4">3.1.-.-</ecNumber>
    </recommendedName>
    <alternativeName>
        <fullName evidence="4">Shh unprocessed N-terminal signaling and C-terminal autoprocessing domains</fullName>
        <shortName evidence="4">ShhNC</shortName>
    </alternativeName>
    <alternativeName>
        <fullName>VHH-1</fullName>
    </alternativeName>
    <alternativeName>
        <fullName>X-SHH</fullName>
    </alternativeName>
    <component>
        <recommendedName>
            <fullName>Sonic hedgehog protein N-product</fullName>
            <shortName>ShhN</shortName>
        </recommendedName>
        <alternativeName>
            <fullName evidence="4">Shh N-terminal processed signaling domains</fullName>
            <shortName evidence="4">ShhNp</shortName>
        </alternativeName>
    </component>
</protein>
<name>SHH_XENLA</name>
<dbReference type="EC" id="3.1.-.-" evidence="4"/>
<dbReference type="EMBL" id="L39213">
    <property type="protein sequence ID" value="AAC42227.1"/>
    <property type="molecule type" value="mRNA"/>
</dbReference>
<dbReference type="EMBL" id="U26314">
    <property type="protein sequence ID" value="AAA85162.1"/>
    <property type="molecule type" value="mRNA"/>
</dbReference>
<dbReference type="EMBL" id="L35248">
    <property type="protein sequence ID" value="AAA49981.1"/>
    <property type="molecule type" value="mRNA"/>
</dbReference>
<dbReference type="PIR" id="S56765">
    <property type="entry name" value="S56765"/>
</dbReference>
<dbReference type="RefSeq" id="NP_001081782.1">
    <property type="nucleotide sequence ID" value="NM_001088313.1"/>
</dbReference>
<dbReference type="SMR" id="Q92000"/>
<dbReference type="MEROPS" id="C46.002"/>
<dbReference type="GeneID" id="398047"/>
<dbReference type="KEGG" id="xla:398047"/>
<dbReference type="AGR" id="Xenbase:XB-GENE-864913"/>
<dbReference type="CTD" id="398047"/>
<dbReference type="Xenbase" id="XB-GENE-864913">
    <property type="gene designation" value="shh.L"/>
</dbReference>
<dbReference type="OMA" id="HQVDLQS"/>
<dbReference type="OrthoDB" id="5212at2759"/>
<dbReference type="Proteomes" id="UP000186698">
    <property type="component" value="Chromosome 6L"/>
</dbReference>
<dbReference type="Bgee" id="398047">
    <property type="expression patterns" value="Expressed in lung and 8 other cell types or tissues"/>
</dbReference>
<dbReference type="GO" id="GO:0005783">
    <property type="term" value="C:endoplasmic reticulum"/>
    <property type="evidence" value="ECO:0000250"/>
    <property type="project" value="UniProtKB"/>
</dbReference>
<dbReference type="GO" id="GO:0005789">
    <property type="term" value="C:endoplasmic reticulum membrane"/>
    <property type="evidence" value="ECO:0007669"/>
    <property type="project" value="UniProtKB-SubCell"/>
</dbReference>
<dbReference type="GO" id="GO:0005615">
    <property type="term" value="C:extracellular space"/>
    <property type="evidence" value="ECO:0000250"/>
    <property type="project" value="UniProtKB"/>
</dbReference>
<dbReference type="GO" id="GO:0005794">
    <property type="term" value="C:Golgi apparatus"/>
    <property type="evidence" value="ECO:0000250"/>
    <property type="project" value="UniProtKB"/>
</dbReference>
<dbReference type="GO" id="GO:0000139">
    <property type="term" value="C:Golgi membrane"/>
    <property type="evidence" value="ECO:0007669"/>
    <property type="project" value="UniProtKB-SubCell"/>
</dbReference>
<dbReference type="GO" id="GO:0005886">
    <property type="term" value="C:plasma membrane"/>
    <property type="evidence" value="ECO:0007669"/>
    <property type="project" value="UniProtKB-SubCell"/>
</dbReference>
<dbReference type="GO" id="GO:0005509">
    <property type="term" value="F:calcium ion binding"/>
    <property type="evidence" value="ECO:0000250"/>
    <property type="project" value="UniProtKB"/>
</dbReference>
<dbReference type="GO" id="GO:0140853">
    <property type="term" value="F:cholesterol-protein transferase activity"/>
    <property type="evidence" value="ECO:0000250"/>
    <property type="project" value="UniProtKB"/>
</dbReference>
<dbReference type="GO" id="GO:0005113">
    <property type="term" value="F:patched binding"/>
    <property type="evidence" value="ECO:0000318"/>
    <property type="project" value="GO_Central"/>
</dbReference>
<dbReference type="GO" id="GO:0008233">
    <property type="term" value="F:peptidase activity"/>
    <property type="evidence" value="ECO:0000250"/>
    <property type="project" value="UniProtKB"/>
</dbReference>
<dbReference type="GO" id="GO:0008270">
    <property type="term" value="F:zinc ion binding"/>
    <property type="evidence" value="ECO:0000250"/>
    <property type="project" value="UniProtKB"/>
</dbReference>
<dbReference type="GO" id="GO:0048513">
    <property type="term" value="P:animal organ development"/>
    <property type="evidence" value="ECO:0007669"/>
    <property type="project" value="UniProtKB-ARBA"/>
</dbReference>
<dbReference type="GO" id="GO:0048468">
    <property type="term" value="P:cell development"/>
    <property type="evidence" value="ECO:0007669"/>
    <property type="project" value="UniProtKB-ARBA"/>
</dbReference>
<dbReference type="GO" id="GO:0001708">
    <property type="term" value="P:cell fate specification"/>
    <property type="evidence" value="ECO:0000318"/>
    <property type="project" value="GO_Central"/>
</dbReference>
<dbReference type="GO" id="GO:0007267">
    <property type="term" value="P:cell-cell signaling"/>
    <property type="evidence" value="ECO:0007669"/>
    <property type="project" value="InterPro"/>
</dbReference>
<dbReference type="GO" id="GO:0007417">
    <property type="term" value="P:central nervous system development"/>
    <property type="evidence" value="ECO:0007669"/>
    <property type="project" value="UniProtKB-ARBA"/>
</dbReference>
<dbReference type="GO" id="GO:0016539">
    <property type="term" value="P:intein-mediated protein splicing"/>
    <property type="evidence" value="ECO:0007669"/>
    <property type="project" value="InterPro"/>
</dbReference>
<dbReference type="GO" id="GO:0030182">
    <property type="term" value="P:neuron differentiation"/>
    <property type="evidence" value="ECO:0007669"/>
    <property type="project" value="UniProtKB-ARBA"/>
</dbReference>
<dbReference type="GO" id="GO:0007389">
    <property type="term" value="P:pattern specification process"/>
    <property type="evidence" value="ECO:0007669"/>
    <property type="project" value="UniProtKB-ARBA"/>
</dbReference>
<dbReference type="GO" id="GO:0045880">
    <property type="term" value="P:positive regulation of smoothened signaling pathway"/>
    <property type="evidence" value="ECO:0000250"/>
    <property type="project" value="UniProtKB"/>
</dbReference>
<dbReference type="GO" id="GO:0016540">
    <property type="term" value="P:protein autoprocessing"/>
    <property type="evidence" value="ECO:0007669"/>
    <property type="project" value="InterPro"/>
</dbReference>
<dbReference type="GO" id="GO:0042127">
    <property type="term" value="P:regulation of cell population proliferation"/>
    <property type="evidence" value="ECO:0007669"/>
    <property type="project" value="UniProtKB-ARBA"/>
</dbReference>
<dbReference type="GO" id="GO:0050793">
    <property type="term" value="P:regulation of developmental process"/>
    <property type="evidence" value="ECO:0007669"/>
    <property type="project" value="UniProtKB-ARBA"/>
</dbReference>
<dbReference type="GO" id="GO:0010468">
    <property type="term" value="P:regulation of gene expression"/>
    <property type="evidence" value="ECO:0000318"/>
    <property type="project" value="GO_Central"/>
</dbReference>
<dbReference type="GO" id="GO:0097264">
    <property type="term" value="P:self proteolysis"/>
    <property type="evidence" value="ECO:0000250"/>
    <property type="project" value="UniProtKB"/>
</dbReference>
<dbReference type="GO" id="GO:0007224">
    <property type="term" value="P:smoothened signaling pathway"/>
    <property type="evidence" value="ECO:0000318"/>
    <property type="project" value="GO_Central"/>
</dbReference>
<dbReference type="GO" id="GO:0009888">
    <property type="term" value="P:tissue development"/>
    <property type="evidence" value="ECO:0007669"/>
    <property type="project" value="UniProtKB-ARBA"/>
</dbReference>
<dbReference type="GO" id="GO:0035295">
    <property type="term" value="P:tube development"/>
    <property type="evidence" value="ECO:0007669"/>
    <property type="project" value="UniProtKB-ARBA"/>
</dbReference>
<dbReference type="CDD" id="cd00081">
    <property type="entry name" value="Hint"/>
    <property type="match status" value="1"/>
</dbReference>
<dbReference type="FunFam" id="2.170.16.10:FF:000001">
    <property type="entry name" value="Indian hedgehog"/>
    <property type="match status" value="1"/>
</dbReference>
<dbReference type="FunFam" id="3.30.1380.10:FF:000001">
    <property type="entry name" value="Indian hedgehog"/>
    <property type="match status" value="1"/>
</dbReference>
<dbReference type="Gene3D" id="3.30.1380.10">
    <property type="match status" value="1"/>
</dbReference>
<dbReference type="Gene3D" id="2.170.16.10">
    <property type="entry name" value="Hedgehog/Intein (Hint) domain"/>
    <property type="match status" value="1"/>
</dbReference>
<dbReference type="InterPro" id="IPR001657">
    <property type="entry name" value="Hedgehog"/>
</dbReference>
<dbReference type="InterPro" id="IPR001767">
    <property type="entry name" value="Hedgehog_Hint"/>
</dbReference>
<dbReference type="InterPro" id="IPR009045">
    <property type="entry name" value="Hedgehog_sig/DD-Pept_Zn-bd_sf"/>
</dbReference>
<dbReference type="InterPro" id="IPR050387">
    <property type="entry name" value="Hedgehog_Signaling"/>
</dbReference>
<dbReference type="InterPro" id="IPR000320">
    <property type="entry name" value="Hedgehog_signalling_dom"/>
</dbReference>
<dbReference type="InterPro" id="IPR003586">
    <property type="entry name" value="Hint_dom_C"/>
</dbReference>
<dbReference type="InterPro" id="IPR003587">
    <property type="entry name" value="Hint_dom_N"/>
</dbReference>
<dbReference type="InterPro" id="IPR036844">
    <property type="entry name" value="Hint_dom_sf"/>
</dbReference>
<dbReference type="InterPro" id="IPR006141">
    <property type="entry name" value="Intein_N"/>
</dbReference>
<dbReference type="PANTHER" id="PTHR11889">
    <property type="entry name" value="HEDGEHOG"/>
    <property type="match status" value="1"/>
</dbReference>
<dbReference type="PANTHER" id="PTHR11889:SF36">
    <property type="entry name" value="SONIC HEDGEHOG PROTEIN"/>
    <property type="match status" value="1"/>
</dbReference>
<dbReference type="Pfam" id="PF01085">
    <property type="entry name" value="HH_signal"/>
    <property type="match status" value="1"/>
</dbReference>
<dbReference type="Pfam" id="PF01079">
    <property type="entry name" value="Hint"/>
    <property type="match status" value="1"/>
</dbReference>
<dbReference type="PIRSF" id="PIRSF009400">
    <property type="entry name" value="Peptidase_C46"/>
    <property type="match status" value="1"/>
</dbReference>
<dbReference type="PRINTS" id="PR00632">
    <property type="entry name" value="SONICHHOG"/>
</dbReference>
<dbReference type="SMART" id="SM00305">
    <property type="entry name" value="HintC"/>
    <property type="match status" value="1"/>
</dbReference>
<dbReference type="SMART" id="SM00306">
    <property type="entry name" value="HintN"/>
    <property type="match status" value="1"/>
</dbReference>
<dbReference type="SUPFAM" id="SSF55166">
    <property type="entry name" value="Hedgehog/DD-peptidase"/>
    <property type="match status" value="1"/>
</dbReference>
<dbReference type="SUPFAM" id="SSF51294">
    <property type="entry name" value="Hedgehog/intein (Hint) domain"/>
    <property type="match status" value="1"/>
</dbReference>
<dbReference type="PROSITE" id="PS50817">
    <property type="entry name" value="INTEIN_N_TER"/>
    <property type="match status" value="1"/>
</dbReference>
<proteinExistence type="evidence at transcript level"/>
<gene>
    <name evidence="3" type="primary">shh</name>
</gene>
<organism>
    <name type="scientific">Xenopus laevis</name>
    <name type="common">African clawed frog</name>
    <dbReference type="NCBI Taxonomy" id="8355"/>
    <lineage>
        <taxon>Eukaryota</taxon>
        <taxon>Metazoa</taxon>
        <taxon>Chordata</taxon>
        <taxon>Craniata</taxon>
        <taxon>Vertebrata</taxon>
        <taxon>Euteleostomi</taxon>
        <taxon>Amphibia</taxon>
        <taxon>Batrachia</taxon>
        <taxon>Anura</taxon>
        <taxon>Pipoidea</taxon>
        <taxon>Pipidae</taxon>
        <taxon>Xenopodinae</taxon>
        <taxon>Xenopus</taxon>
        <taxon>Xenopus</taxon>
    </lineage>
</organism>
<reference key="1">
    <citation type="journal article" date="1995" name="Nucleic Acids Res.">
        <title>Xenopus sonic hedgehog as a potential morphogen during embryogenesis and thyroid hormone-dependent metamorphosis.</title>
        <authorList>
            <person name="Stolow M.A."/>
            <person name="Shi Y.-B."/>
        </authorList>
    </citation>
    <scope>NUCLEOTIDE SEQUENCE [MRNA]</scope>
    <scope>FUNCTION</scope>
    <scope>TISSUE SPECIFICITY</scope>
    <scope>DEVELOPMENTAL STAGE</scope>
    <scope>INDUCTION</scope>
    <source>
        <tissue>Intestine</tissue>
    </source>
</reference>
<reference key="2">
    <citation type="journal article" date="1995" name="Development">
        <title>Distinct expression and shared activities of members of the hedgehog gene family of Xenopus laevis.</title>
        <authorList>
            <person name="Ekker S.C."/>
            <person name="McGrew L.L."/>
            <person name="Lai C.-J."/>
            <person name="Lee J.J."/>
            <person name="von Kessler D.P."/>
            <person name="Moon R.T."/>
            <person name="Beachy P.A."/>
        </authorList>
    </citation>
    <scope>NUCLEOTIDE SEQUENCE [MRNA]</scope>
    <scope>FUNCTION</scope>
    <scope>TISSUE SPECIFICITY</scope>
    <scope>DEVELOPMENTAL STAGE</scope>
    <source>
        <tissue>Embryo</tissue>
    </source>
</reference>
<reference key="3">
    <citation type="journal article" date="1995" name="Mol. Cell. Neurosci.">
        <title>Restrictions to floor plate induction by hedgehog and winged-helix genes in the neural tube of frog embryos.</title>
        <authorList>
            <person name="Ruiz i Altaba A."/>
            <person name="Jessell T.M."/>
            <person name="Roelink H."/>
        </authorList>
    </citation>
    <scope>NUCLEOTIDE SEQUENCE [MRNA]</scope>
    <scope>FUNCTION</scope>
    <scope>TISSUE SPECIFICITY</scope>
    <scope>DEVELOPMENTAL STAGE</scope>
    <source>
        <tissue>Notochord</tissue>
    </source>
</reference>
<evidence type="ECO:0000250" key="1"/>
<evidence type="ECO:0000250" key="2">
    <source>
        <dbReference type="UniProtKB" id="Q02936"/>
    </source>
</evidence>
<evidence type="ECO:0000250" key="3">
    <source>
        <dbReference type="UniProtKB" id="Q15465"/>
    </source>
</evidence>
<evidence type="ECO:0000250" key="4">
    <source>
        <dbReference type="UniProtKB" id="Q62226"/>
    </source>
</evidence>
<evidence type="ECO:0000269" key="5">
    <source>
    </source>
</evidence>
<evidence type="ECO:0000269" key="6">
    <source>
    </source>
</evidence>
<evidence type="ECO:0000269" key="7">
    <source>
    </source>
</evidence>
<evidence type="ECO:0000305" key="8"/>
<comment type="function">
    <molecule>Sonic hedgehog protein</molecule>
    <text evidence="3 4">The C-terminal part of the sonic hedgehog protein precursor displays an autoproteolysis and a cholesterol transferase activity (By similarity). Both activities result in the cleavage of the full-length protein into two parts (ShhN and ShhC) followed by the covalent attachment of a cholesterol moiety to the C-terminal of the newly generated ShhN (By similarity). Both activities occur in the endoplasmic reticulum (By similarity). Once cleaved, ShhC is degraded in the endoplasmic reticulum (By similarity).</text>
</comment>
<comment type="function">
    <molecule>Sonic hedgehog protein N-product</molecule>
    <text evidence="3 4 5 6 7">The dually lipidated sonic hedgehog protein N-product (ShhNp) is a morphogen which is essential for a variety of patterning events during development. Induces ventral cell fate in the neural tube and somites (By similarity). Involved in the patterning of the anterior-posterior axis of the developing limb bud (By similarity). Essential for axon guidance (By similarity). Binds to the patched (PTCH1) receptor, which functions in association with smoothened (SMO), to activate the transcription of target genes (By similarity). In the absence of SHH, PTCH1 represses the constitutive signaling activity of SMO (By similarity).</text>
</comment>
<comment type="catalytic activity">
    <molecule>Sonic hedgehog protein</molecule>
    <reaction evidence="4">
        <text>glycyl-L-cysteinyl-[protein] + cholesterol + H(+) = [protein]-C-terminal glycyl cholesterol ester + N-terminal L-cysteinyl-[protein]</text>
        <dbReference type="Rhea" id="RHEA:59504"/>
        <dbReference type="Rhea" id="RHEA-COMP:12707"/>
        <dbReference type="Rhea" id="RHEA-COMP:15369"/>
        <dbReference type="Rhea" id="RHEA-COMP:15374"/>
        <dbReference type="ChEBI" id="CHEBI:15378"/>
        <dbReference type="ChEBI" id="CHEBI:16113"/>
        <dbReference type="ChEBI" id="CHEBI:65250"/>
        <dbReference type="ChEBI" id="CHEBI:143135"/>
        <dbReference type="ChEBI" id="CHEBI:143140"/>
    </reaction>
    <physiologicalReaction direction="left-to-right" evidence="4">
        <dbReference type="Rhea" id="RHEA:59505"/>
    </physiologicalReaction>
</comment>
<comment type="subunit">
    <text evidence="3 4">Interacts with HHATL/GUP1 which negatively regulates HHAT-mediated palmitoylation of the SHH N-terminus (By similarity). Interacts with BOC and CDON (By similarity). Interacts with HHIP (By similarity). Interacts with DISP1 via its cholesterol anchor (By similarity). Interacts with SCUBE2 (By similarity).</text>
</comment>
<comment type="subunit">
    <molecule>Sonic hedgehog protein N-product</molecule>
    <text evidence="3">Multimer.</text>
</comment>
<comment type="subcellular location">
    <molecule>Sonic hedgehog protein</molecule>
    <subcellularLocation>
        <location evidence="3">Endoplasmic reticulum membrane</location>
    </subcellularLocation>
    <subcellularLocation>
        <location evidence="3">Golgi apparatus membrane</location>
    </subcellularLocation>
    <text evidence="3">Co-localizes with HHAT in the ER and Golgi membrane.</text>
</comment>
<comment type="subcellular location">
    <molecule>Sonic hedgehog protein N-product</molecule>
    <subcellularLocation>
        <location evidence="4">Cell membrane</location>
        <topology evidence="4">Lipid-anchor</topology>
    </subcellularLocation>
    <text evidence="4">The dual-lipidated sonic hedgehog protein N-product (ShhNp) is firmly tethered to the cell membrane where it forms multimers (By similarity). Further solubilization and release from the cell surface seem to be achieved through different mechanisms, including the interaction with DISP1 and SCUBE2, movement by lipoprotein particles, transport by cellular extensions called cytonemes or by the proteolytic removal of both terminal lipidated peptides.</text>
</comment>
<comment type="tissue specificity">
    <text evidence="5 6 7">Strongly expressed in notochord and neural floor plate during embryogenesis. In tadpole, high expression is observed in pancreas/stomach, moderate expression in tail, and low expression in intestine, brain, and hind limb.</text>
</comment>
<comment type="developmental stage">
    <text evidence="5 6 7">First detected at the neurula (stages 16-17). First peak of expression around tadpole hatching (stages 33-40). High expression observed in intestine at the climax of morphogenesis (stages 60-62) when intestine epithelial undergoes morphogenesis.</text>
</comment>
<comment type="induction">
    <text evidence="6">By thyroid hormone.</text>
</comment>
<comment type="domain">
    <molecule>Sonic hedgehog protein N-product</molecule>
    <text evidence="4">Binds calcium and zinc ions; this stabilizes the protein fold and is essential for protein-protein interactions mediated by this domain.</text>
</comment>
<comment type="domain">
    <molecule>Sonic hedgehog protein N-product</molecule>
    <text evidence="4">The Cardin-Weintraub (CW) motif is required for heparan sulfate binding of the solubilized ShhNp (By similarity). The N-terminal palmitoylated peptide is cleaved at the Heparan sulfate-binding Cardin-Weintraub (CW) motif site (By similarity). The cleavage reduced the interactions with heparan sulfate. The cleavage is enhanced by SCUBE2 (By similarity).</text>
</comment>
<comment type="PTM">
    <molecule>Sonic hedgehog protein</molecule>
    <text evidence="4">The C-terminal domain displays an autoproteolysis activity and a cholesterol transferase activity (By similarity). Both activities result in the cleavage of the full-length protein and covalent attachment of a cholesterol moiety to the C-terminal of the newly generated N-terminal fragment (ShhN) (By similarity). Cholesterylation is required for the sonic hedgehog protein N-product targeting to lipid rafts and multimerization (By similarity). ShhN is the active species in both local and long-range signaling, whereas the C-product (ShhC) is degraded in the reticulum endoplasmic (By similarity).</text>
</comment>
<comment type="PTM">
    <molecule>Sonic hedgehog protein N-product</molecule>
    <text evidence="4">N-palmitoylation by HHAT of ShhN is required for sonic hedgehog protein N-product multimerization and full activity (By similarity). It is a prerequisite for the membrane-proximal positioning and the subsequent shedding of this N-terminal peptide (By similarity).</text>
</comment>
<comment type="PTM">
    <molecule>Sonic hedgehog protein N-product</molecule>
    <text evidence="4">The lipidated N- and C-terminal peptides of ShhNp can be cleaved (shedding) (By similarity). The N-terminal palmitoylated peptide is cleaved at the Cardin-Weintraub (CW) motif site (By similarity). The cleavage reduced the interactions with heparan sulfate (By similarity). The cleavage is enhanced by SCUBE2 (By similarity).</text>
</comment>
<comment type="similarity">
    <text evidence="8">Belongs to the hedgehog family.</text>
</comment>
<comment type="caution">
    <text evidence="4">The several steps and mechanisms that permit controlled Shh dispersion and gradient formation remain controversial. The ShhNC C-terminal domain displays an autoproteolysis activity and a cholesterol transferase activity resulting in the cleavage and covalent attachment of a cholesterol moiety to the C-terminal of the newly generated N-terminal fragment (ShhN). The protein is further modified by covalent addition of palmitate at the N-terminal of ShhN, resulting to the dual-lipidated Shh (ShhNp). ShhNp is firmly tethered to the cell membrane where it forms multimers. Further solubilization and release from the cell surface seem to be achieved through different mechanisms, including the interaction with DISP1 and SCUBE2, movement by lipoprotein particles, transport by cellular extensions called cytonemes or by proteolytic removal of both terminal lipidated peptides. Once released, the fully processed Shh can signal within embryonic tissues both at short and long-range.</text>
</comment>